<gene>
    <name evidence="1" type="primary">rplA</name>
    <name type="ordered locus">LVIS_0589</name>
</gene>
<sequence length="232" mass="24705">MAHKRGKKYQDAAKQVEADKVYGMGDAIDLVKKIDFAKFDATVEVAFKLNVDTKQADQQLRGALVLPNGTGKETTVIVFAKGDQAKAAEAAGADVVGEQDLVERIQDGWLDFDVAIATPDMMAQVGRLGRVLGPKGLMPNPKTGTVTMNVEKAVSDAKNGQVTYRTDRDGNVAVPFGKVSFDADKLAGNLKSIAETIVRIRPAAVRGTYVQHVSISSTFGPSVDVDLASLLA</sequence>
<feature type="chain" id="PRO_0000308027" description="Large ribosomal subunit protein uL1">
    <location>
        <begin position="1"/>
        <end position="232"/>
    </location>
</feature>
<comment type="function">
    <text evidence="1">Binds directly to 23S rRNA. The L1 stalk is quite mobile in the ribosome, and is involved in E site tRNA release.</text>
</comment>
<comment type="function">
    <text evidence="1">Protein L1 is also a translational repressor protein, it controls the translation of the L11 operon by binding to its mRNA.</text>
</comment>
<comment type="subunit">
    <text evidence="1">Part of the 50S ribosomal subunit.</text>
</comment>
<comment type="similarity">
    <text evidence="1">Belongs to the universal ribosomal protein uL1 family.</text>
</comment>
<keyword id="KW-1185">Reference proteome</keyword>
<keyword id="KW-0678">Repressor</keyword>
<keyword id="KW-0687">Ribonucleoprotein</keyword>
<keyword id="KW-0689">Ribosomal protein</keyword>
<keyword id="KW-0694">RNA-binding</keyword>
<keyword id="KW-0699">rRNA-binding</keyword>
<keyword id="KW-0810">Translation regulation</keyword>
<keyword id="KW-0820">tRNA-binding</keyword>
<organism>
    <name type="scientific">Levilactobacillus brevis (strain ATCC 367 / BCRC 12310 / CIP 105137 / JCM 1170 / LMG 11437 / NCIMB 947 / NCTC 947)</name>
    <name type="common">Lactobacillus brevis</name>
    <dbReference type="NCBI Taxonomy" id="387344"/>
    <lineage>
        <taxon>Bacteria</taxon>
        <taxon>Bacillati</taxon>
        <taxon>Bacillota</taxon>
        <taxon>Bacilli</taxon>
        <taxon>Lactobacillales</taxon>
        <taxon>Lactobacillaceae</taxon>
        <taxon>Levilactobacillus</taxon>
    </lineage>
</organism>
<proteinExistence type="inferred from homology"/>
<name>RL1_LEVBA</name>
<evidence type="ECO:0000255" key="1">
    <source>
        <dbReference type="HAMAP-Rule" id="MF_01318"/>
    </source>
</evidence>
<evidence type="ECO:0000305" key="2"/>
<reference key="1">
    <citation type="journal article" date="2006" name="Proc. Natl. Acad. Sci. U.S.A.">
        <title>Comparative genomics of the lactic acid bacteria.</title>
        <authorList>
            <person name="Makarova K.S."/>
            <person name="Slesarev A."/>
            <person name="Wolf Y.I."/>
            <person name="Sorokin A."/>
            <person name="Mirkin B."/>
            <person name="Koonin E.V."/>
            <person name="Pavlov A."/>
            <person name="Pavlova N."/>
            <person name="Karamychev V."/>
            <person name="Polouchine N."/>
            <person name="Shakhova V."/>
            <person name="Grigoriev I."/>
            <person name="Lou Y."/>
            <person name="Rohksar D."/>
            <person name="Lucas S."/>
            <person name="Huang K."/>
            <person name="Goodstein D.M."/>
            <person name="Hawkins T."/>
            <person name="Plengvidhya V."/>
            <person name="Welker D."/>
            <person name="Hughes J."/>
            <person name="Goh Y."/>
            <person name="Benson A."/>
            <person name="Baldwin K."/>
            <person name="Lee J.-H."/>
            <person name="Diaz-Muniz I."/>
            <person name="Dosti B."/>
            <person name="Smeianov V."/>
            <person name="Wechter W."/>
            <person name="Barabote R."/>
            <person name="Lorca G."/>
            <person name="Altermann E."/>
            <person name="Barrangou R."/>
            <person name="Ganesan B."/>
            <person name="Xie Y."/>
            <person name="Rawsthorne H."/>
            <person name="Tamir D."/>
            <person name="Parker C."/>
            <person name="Breidt F."/>
            <person name="Broadbent J.R."/>
            <person name="Hutkins R."/>
            <person name="O'Sullivan D."/>
            <person name="Steele J."/>
            <person name="Unlu G."/>
            <person name="Saier M.H. Jr."/>
            <person name="Klaenhammer T."/>
            <person name="Richardson P."/>
            <person name="Kozyavkin S."/>
            <person name="Weimer B.C."/>
            <person name="Mills D.A."/>
        </authorList>
    </citation>
    <scope>NUCLEOTIDE SEQUENCE [LARGE SCALE GENOMIC DNA]</scope>
    <source>
        <strain>ATCC 367 / BCRC 12310 / CIP 105137 / JCM 1170 / LMG 11437 / NCIMB 947 / NCTC 947</strain>
    </source>
</reference>
<accession>Q03ST8</accession>
<protein>
    <recommendedName>
        <fullName evidence="1">Large ribosomal subunit protein uL1</fullName>
    </recommendedName>
    <alternativeName>
        <fullName evidence="2">50S ribosomal protein L1</fullName>
    </alternativeName>
</protein>
<dbReference type="EMBL" id="CP000416">
    <property type="protein sequence ID" value="ABJ63734.1"/>
    <property type="molecule type" value="Genomic_DNA"/>
</dbReference>
<dbReference type="RefSeq" id="WP_011667359.1">
    <property type="nucleotide sequence ID" value="NC_008497.1"/>
</dbReference>
<dbReference type="SMR" id="Q03ST8"/>
<dbReference type="STRING" id="387344.LVIS_0589"/>
<dbReference type="GeneID" id="56992406"/>
<dbReference type="KEGG" id="lbr:LVIS_0589"/>
<dbReference type="eggNOG" id="COG0081">
    <property type="taxonomic scope" value="Bacteria"/>
</dbReference>
<dbReference type="HOGENOM" id="CLU_062853_0_0_9"/>
<dbReference type="Proteomes" id="UP000001652">
    <property type="component" value="Chromosome"/>
</dbReference>
<dbReference type="GO" id="GO:0015934">
    <property type="term" value="C:large ribosomal subunit"/>
    <property type="evidence" value="ECO:0007669"/>
    <property type="project" value="InterPro"/>
</dbReference>
<dbReference type="GO" id="GO:0019843">
    <property type="term" value="F:rRNA binding"/>
    <property type="evidence" value="ECO:0007669"/>
    <property type="project" value="UniProtKB-UniRule"/>
</dbReference>
<dbReference type="GO" id="GO:0003735">
    <property type="term" value="F:structural constituent of ribosome"/>
    <property type="evidence" value="ECO:0007669"/>
    <property type="project" value="InterPro"/>
</dbReference>
<dbReference type="GO" id="GO:0000049">
    <property type="term" value="F:tRNA binding"/>
    <property type="evidence" value="ECO:0007669"/>
    <property type="project" value="UniProtKB-KW"/>
</dbReference>
<dbReference type="GO" id="GO:0006417">
    <property type="term" value="P:regulation of translation"/>
    <property type="evidence" value="ECO:0007669"/>
    <property type="project" value="UniProtKB-KW"/>
</dbReference>
<dbReference type="GO" id="GO:0006412">
    <property type="term" value="P:translation"/>
    <property type="evidence" value="ECO:0007669"/>
    <property type="project" value="UniProtKB-UniRule"/>
</dbReference>
<dbReference type="CDD" id="cd00403">
    <property type="entry name" value="Ribosomal_L1"/>
    <property type="match status" value="1"/>
</dbReference>
<dbReference type="FunFam" id="3.40.50.790:FF:000001">
    <property type="entry name" value="50S ribosomal protein L1"/>
    <property type="match status" value="1"/>
</dbReference>
<dbReference type="Gene3D" id="3.30.190.20">
    <property type="match status" value="1"/>
</dbReference>
<dbReference type="Gene3D" id="3.40.50.790">
    <property type="match status" value="1"/>
</dbReference>
<dbReference type="HAMAP" id="MF_01318_B">
    <property type="entry name" value="Ribosomal_uL1_B"/>
    <property type="match status" value="1"/>
</dbReference>
<dbReference type="InterPro" id="IPR005878">
    <property type="entry name" value="Ribosom_uL1_bac-type"/>
</dbReference>
<dbReference type="InterPro" id="IPR002143">
    <property type="entry name" value="Ribosomal_uL1"/>
</dbReference>
<dbReference type="InterPro" id="IPR023674">
    <property type="entry name" value="Ribosomal_uL1-like"/>
</dbReference>
<dbReference type="InterPro" id="IPR028364">
    <property type="entry name" value="Ribosomal_uL1/biogenesis"/>
</dbReference>
<dbReference type="InterPro" id="IPR016095">
    <property type="entry name" value="Ribosomal_uL1_3-a/b-sand"/>
</dbReference>
<dbReference type="InterPro" id="IPR023673">
    <property type="entry name" value="Ribosomal_uL1_CS"/>
</dbReference>
<dbReference type="NCBIfam" id="TIGR01169">
    <property type="entry name" value="rplA_bact"/>
    <property type="match status" value="1"/>
</dbReference>
<dbReference type="PANTHER" id="PTHR36427">
    <property type="entry name" value="54S RIBOSOMAL PROTEIN L1, MITOCHONDRIAL"/>
    <property type="match status" value="1"/>
</dbReference>
<dbReference type="PANTHER" id="PTHR36427:SF3">
    <property type="entry name" value="LARGE RIBOSOMAL SUBUNIT PROTEIN UL1M"/>
    <property type="match status" value="1"/>
</dbReference>
<dbReference type="Pfam" id="PF00687">
    <property type="entry name" value="Ribosomal_L1"/>
    <property type="match status" value="1"/>
</dbReference>
<dbReference type="PIRSF" id="PIRSF002155">
    <property type="entry name" value="Ribosomal_L1"/>
    <property type="match status" value="1"/>
</dbReference>
<dbReference type="SUPFAM" id="SSF56808">
    <property type="entry name" value="Ribosomal protein L1"/>
    <property type="match status" value="1"/>
</dbReference>
<dbReference type="PROSITE" id="PS01199">
    <property type="entry name" value="RIBOSOMAL_L1"/>
    <property type="match status" value="1"/>
</dbReference>